<dbReference type="EMBL" id="CP001184">
    <property type="protein sequence ID" value="ACI59962.1"/>
    <property type="molecule type" value="Genomic_DNA"/>
</dbReference>
<dbReference type="RefSeq" id="WP_004026085.1">
    <property type="nucleotide sequence ID" value="NC_011374.1"/>
</dbReference>
<dbReference type="SMR" id="B5ZBZ8"/>
<dbReference type="STRING" id="565575.UUR10_0562"/>
<dbReference type="GeneID" id="93849019"/>
<dbReference type="KEGG" id="uue:UUR10_0562"/>
<dbReference type="eggNOG" id="COG1159">
    <property type="taxonomic scope" value="Bacteria"/>
</dbReference>
<dbReference type="HOGENOM" id="CLU_038009_1_0_14"/>
<dbReference type="OrthoDB" id="9805918at2"/>
<dbReference type="Proteomes" id="UP000002018">
    <property type="component" value="Chromosome"/>
</dbReference>
<dbReference type="GO" id="GO:0005829">
    <property type="term" value="C:cytosol"/>
    <property type="evidence" value="ECO:0007669"/>
    <property type="project" value="TreeGrafter"/>
</dbReference>
<dbReference type="GO" id="GO:0005886">
    <property type="term" value="C:plasma membrane"/>
    <property type="evidence" value="ECO:0007669"/>
    <property type="project" value="UniProtKB-SubCell"/>
</dbReference>
<dbReference type="GO" id="GO:0005525">
    <property type="term" value="F:GTP binding"/>
    <property type="evidence" value="ECO:0007669"/>
    <property type="project" value="UniProtKB-UniRule"/>
</dbReference>
<dbReference type="GO" id="GO:0003924">
    <property type="term" value="F:GTPase activity"/>
    <property type="evidence" value="ECO:0007669"/>
    <property type="project" value="UniProtKB-UniRule"/>
</dbReference>
<dbReference type="GO" id="GO:0043024">
    <property type="term" value="F:ribosomal small subunit binding"/>
    <property type="evidence" value="ECO:0007669"/>
    <property type="project" value="TreeGrafter"/>
</dbReference>
<dbReference type="GO" id="GO:0070181">
    <property type="term" value="F:small ribosomal subunit rRNA binding"/>
    <property type="evidence" value="ECO:0007669"/>
    <property type="project" value="UniProtKB-UniRule"/>
</dbReference>
<dbReference type="GO" id="GO:0000028">
    <property type="term" value="P:ribosomal small subunit assembly"/>
    <property type="evidence" value="ECO:0007669"/>
    <property type="project" value="TreeGrafter"/>
</dbReference>
<dbReference type="CDD" id="cd04163">
    <property type="entry name" value="Era"/>
    <property type="match status" value="1"/>
</dbReference>
<dbReference type="CDD" id="cd22534">
    <property type="entry name" value="KH-II_Era"/>
    <property type="match status" value="1"/>
</dbReference>
<dbReference type="Gene3D" id="3.30.300.20">
    <property type="match status" value="1"/>
</dbReference>
<dbReference type="Gene3D" id="3.40.50.300">
    <property type="entry name" value="P-loop containing nucleotide triphosphate hydrolases"/>
    <property type="match status" value="1"/>
</dbReference>
<dbReference type="HAMAP" id="MF_00367">
    <property type="entry name" value="GTPase_Era"/>
    <property type="match status" value="1"/>
</dbReference>
<dbReference type="InterPro" id="IPR030388">
    <property type="entry name" value="G_ERA_dom"/>
</dbReference>
<dbReference type="InterPro" id="IPR006073">
    <property type="entry name" value="GTP-bd"/>
</dbReference>
<dbReference type="InterPro" id="IPR005662">
    <property type="entry name" value="GTPase_Era-like"/>
</dbReference>
<dbReference type="InterPro" id="IPR015946">
    <property type="entry name" value="KH_dom-like_a/b"/>
</dbReference>
<dbReference type="InterPro" id="IPR004044">
    <property type="entry name" value="KH_dom_type_2"/>
</dbReference>
<dbReference type="InterPro" id="IPR009019">
    <property type="entry name" value="KH_sf_prok-type"/>
</dbReference>
<dbReference type="InterPro" id="IPR027417">
    <property type="entry name" value="P-loop_NTPase"/>
</dbReference>
<dbReference type="InterPro" id="IPR005225">
    <property type="entry name" value="Small_GTP-bd"/>
</dbReference>
<dbReference type="NCBIfam" id="TIGR00436">
    <property type="entry name" value="era"/>
    <property type="match status" value="1"/>
</dbReference>
<dbReference type="NCBIfam" id="NF000908">
    <property type="entry name" value="PRK00089.1"/>
    <property type="match status" value="1"/>
</dbReference>
<dbReference type="NCBIfam" id="TIGR00231">
    <property type="entry name" value="small_GTP"/>
    <property type="match status" value="1"/>
</dbReference>
<dbReference type="PANTHER" id="PTHR42698">
    <property type="entry name" value="GTPASE ERA"/>
    <property type="match status" value="1"/>
</dbReference>
<dbReference type="PANTHER" id="PTHR42698:SF1">
    <property type="entry name" value="GTPASE ERA, MITOCHONDRIAL"/>
    <property type="match status" value="1"/>
</dbReference>
<dbReference type="Pfam" id="PF07650">
    <property type="entry name" value="KH_2"/>
    <property type="match status" value="1"/>
</dbReference>
<dbReference type="Pfam" id="PF01926">
    <property type="entry name" value="MMR_HSR1"/>
    <property type="match status" value="1"/>
</dbReference>
<dbReference type="SUPFAM" id="SSF52540">
    <property type="entry name" value="P-loop containing nucleoside triphosphate hydrolases"/>
    <property type="match status" value="1"/>
</dbReference>
<dbReference type="SUPFAM" id="SSF54814">
    <property type="entry name" value="Prokaryotic type KH domain (KH-domain type II)"/>
    <property type="match status" value="1"/>
</dbReference>
<dbReference type="PROSITE" id="PS51713">
    <property type="entry name" value="G_ERA"/>
    <property type="match status" value="1"/>
</dbReference>
<dbReference type="PROSITE" id="PS50823">
    <property type="entry name" value="KH_TYPE_2"/>
    <property type="match status" value="1"/>
</dbReference>
<evidence type="ECO:0000255" key="1">
    <source>
        <dbReference type="HAMAP-Rule" id="MF_00367"/>
    </source>
</evidence>
<evidence type="ECO:0000255" key="2">
    <source>
        <dbReference type="PROSITE-ProRule" id="PRU01050"/>
    </source>
</evidence>
<proteinExistence type="inferred from homology"/>
<gene>
    <name evidence="1" type="primary">era</name>
    <name type="ordered locus">UUR10_0562</name>
</gene>
<accession>B5ZBZ8</accession>
<sequence>MVKKYGIVAIVGKPNVGKSTLINAIMRKKVSIISNKPQTTRNAIKEIYEDDDSAIIFTDTPGFHEPSNKLDLFLNHEIEVSYKEANVILFVSSMDKELSEDDFEIINLIKESNKENVILVISKAEVAKNQDKIDERVHQLNKYIQFKDVIQISALHVINIDKLINTIKQYLHKDVVTDYFRQKVEKEDKFIIAETIREQCLLNLNHEVPHGVGVEIDESKYNQEANHWIIKASIIIEKNSHKPIVIGQNGAMIKKISMAARKQLHEIYDCHISLTIFVKVENNWRENNNVVKSLGYKIKK</sequence>
<protein>
    <recommendedName>
        <fullName evidence="1">GTPase Era</fullName>
    </recommendedName>
</protein>
<feature type="chain" id="PRO_1000121367" description="GTPase Era">
    <location>
        <begin position="1"/>
        <end position="300"/>
    </location>
</feature>
<feature type="domain" description="Era-type G" evidence="2">
    <location>
        <begin position="4"/>
        <end position="173"/>
    </location>
</feature>
<feature type="domain" description="KH type-2" evidence="1">
    <location>
        <begin position="204"/>
        <end position="282"/>
    </location>
</feature>
<feature type="region of interest" description="G1" evidence="2">
    <location>
        <begin position="12"/>
        <end position="19"/>
    </location>
</feature>
<feature type="region of interest" description="G2" evidence="2">
    <location>
        <begin position="38"/>
        <end position="42"/>
    </location>
</feature>
<feature type="region of interest" description="G3" evidence="2">
    <location>
        <begin position="59"/>
        <end position="62"/>
    </location>
</feature>
<feature type="region of interest" description="G4" evidence="2">
    <location>
        <begin position="122"/>
        <end position="125"/>
    </location>
</feature>
<feature type="region of interest" description="G5" evidence="2">
    <location>
        <begin position="152"/>
        <end position="154"/>
    </location>
</feature>
<feature type="binding site" evidence="1">
    <location>
        <begin position="12"/>
        <end position="19"/>
    </location>
    <ligand>
        <name>GTP</name>
        <dbReference type="ChEBI" id="CHEBI:37565"/>
    </ligand>
</feature>
<feature type="binding site" evidence="1">
    <location>
        <begin position="59"/>
        <end position="63"/>
    </location>
    <ligand>
        <name>GTP</name>
        <dbReference type="ChEBI" id="CHEBI:37565"/>
    </ligand>
</feature>
<feature type="binding site" evidence="1">
    <location>
        <begin position="122"/>
        <end position="125"/>
    </location>
    <ligand>
        <name>GTP</name>
        <dbReference type="ChEBI" id="CHEBI:37565"/>
    </ligand>
</feature>
<name>ERA_UREU1</name>
<comment type="function">
    <text evidence="1">An essential GTPase that binds both GDP and GTP, with rapid nucleotide exchange. Plays a role in 16S rRNA processing and 30S ribosomal subunit biogenesis and possibly also in cell cycle regulation and energy metabolism.</text>
</comment>
<comment type="subunit">
    <text evidence="1">Monomer.</text>
</comment>
<comment type="subcellular location">
    <subcellularLocation>
        <location>Cytoplasm</location>
    </subcellularLocation>
    <subcellularLocation>
        <location evidence="1">Cell membrane</location>
        <topology evidence="1">Peripheral membrane protein</topology>
    </subcellularLocation>
</comment>
<comment type="similarity">
    <text evidence="1 2">Belongs to the TRAFAC class TrmE-Era-EngA-EngB-Septin-like GTPase superfamily. Era GTPase family.</text>
</comment>
<organism>
    <name type="scientific">Ureaplasma urealyticum serovar 10 (strain ATCC 33699 / Western)</name>
    <dbReference type="NCBI Taxonomy" id="565575"/>
    <lineage>
        <taxon>Bacteria</taxon>
        <taxon>Bacillati</taxon>
        <taxon>Mycoplasmatota</taxon>
        <taxon>Mycoplasmoidales</taxon>
        <taxon>Mycoplasmoidaceae</taxon>
        <taxon>Ureaplasma</taxon>
    </lineage>
</organism>
<reference key="1">
    <citation type="submission" date="2008-10" db="EMBL/GenBank/DDBJ databases">
        <title>Genome sequence of Ureaplasma urealyticum serovar 10 ATCC-33699.</title>
        <authorList>
            <person name="Shrivastava S."/>
            <person name="Methe B.A."/>
            <person name="Glass J."/>
            <person name="White K."/>
            <person name="Duffy L.B."/>
        </authorList>
    </citation>
    <scope>NUCLEOTIDE SEQUENCE [LARGE SCALE GENOMIC DNA]</scope>
    <source>
        <strain>ATCC 33699 / Western</strain>
    </source>
</reference>
<keyword id="KW-1003">Cell membrane</keyword>
<keyword id="KW-0963">Cytoplasm</keyword>
<keyword id="KW-0342">GTP-binding</keyword>
<keyword id="KW-0472">Membrane</keyword>
<keyword id="KW-0547">Nucleotide-binding</keyword>
<keyword id="KW-0690">Ribosome biogenesis</keyword>
<keyword id="KW-0694">RNA-binding</keyword>
<keyword id="KW-0699">rRNA-binding</keyword>